<keyword id="KW-0007">Acetylation</keyword>
<keyword id="KW-0013">ADP-ribosylation</keyword>
<keyword id="KW-0158">Chromosome</keyword>
<keyword id="KW-0164">Citrullination</keyword>
<keyword id="KW-0903">Direct protein sequencing</keyword>
<keyword id="KW-0238">DNA-binding</keyword>
<keyword id="KW-0379">Hydroxylation</keyword>
<keyword id="KW-0488">Methylation</keyword>
<keyword id="KW-0539">Nucleus</keyword>
<keyword id="KW-0597">Phosphoprotein</keyword>
<keyword id="KW-1185">Reference proteome</keyword>
<reference key="1">
    <citation type="journal article" date="1993" name="Biochim. Biophys. Acta">
        <title>A rat histone H2B pseudogene is closely associated with the histone H1d gene.</title>
        <authorList>
            <person name="Drabent B."/>
            <person name="Kunz C."/>
            <person name="Doenecke D."/>
        </authorList>
    </citation>
    <scope>NUCLEOTIDE SEQUENCE [GENOMIC DNA]</scope>
    <source>
        <tissue>Liver</tissue>
    </source>
</reference>
<reference key="2">
    <citation type="journal article" date="1990" name="Gene">
        <title>Isolation of a genomic clone encoding the rat histone variant, H1d.</title>
        <authorList>
            <person name="Cole K.D."/>
            <person name="Kandala J.C."/>
            <person name="Kremer E."/>
            <person name="Kistler W.S."/>
        </authorList>
    </citation>
    <scope>NUCLEOTIDE SEQUENCE [GENOMIC DNA]</scope>
    <source>
        <strain>Sprague-Dawley</strain>
        <tissue>Liver</tissue>
    </source>
</reference>
<reference key="3">
    <citation type="submission" date="2006-08" db="UniProtKB">
        <authorList>
            <person name="Bienvenut W.V."/>
            <person name="von Kriegsheim A.F."/>
            <person name="Kolch W."/>
        </authorList>
    </citation>
    <scope>PROTEIN SEQUENCE OF 2-17; 34-46 AND 55-75</scope>
    <scope>CLEAVAGE OF INITIATOR METHIONINE</scope>
    <scope>ACETYLATION AT SER-2</scope>
    <scope>IDENTIFICATION BY MASS SPECTROMETRY</scope>
    <source>
        <tissue>Pheochromocytoma</tissue>
    </source>
</reference>
<reference key="4">
    <citation type="journal article" date="1994" name="Protein Sci.">
        <title>A proposal for a coherent mammalian histone H1 nomenclature correlated with amino acid sequences.</title>
        <authorList>
            <person name="Parseghian M.H."/>
            <person name="Henschen A.H."/>
            <person name="Krieglstein K.G."/>
            <person name="Hamkalo B.A."/>
        </authorList>
    </citation>
    <scope>NOMENCLATURE</scope>
</reference>
<reference key="5">
    <citation type="journal article" date="2012" name="Nat. Commun.">
        <title>Quantitative maps of protein phosphorylation sites across 14 different rat organs and tissues.</title>
        <authorList>
            <person name="Lundby A."/>
            <person name="Secher A."/>
            <person name="Lage K."/>
            <person name="Nordsborg N.B."/>
            <person name="Dmytriyev A."/>
            <person name="Lundby C."/>
            <person name="Olsen J.V."/>
        </authorList>
    </citation>
    <scope>PHOSPHORYLATION [LARGE SCALE ANALYSIS] AT SER-2 AND THR-18</scope>
    <scope>IDENTIFICATION BY MASS SPECTROMETRY [LARGE SCALE ANALYSIS]</scope>
</reference>
<gene>
    <name evidence="2" type="primary">H1-4</name>
    <name evidence="10" type="synonym">H1f4</name>
</gene>
<sequence>MSETAPAAPAAPAPAEKTPIKKKARKAAGGAKRKASGPPVSELITKAVAASKERSGVSLAALKKALAAAGYDVEKNNSRIKLGLKSLVSKGTLVQTKGTGASGSFKLNKKAASGEAKPKAKKAGAAKAKKPAGAAKKPKKATGTATPKKSTKKTPKKAKKPAAAAGAKKAKSPKKAKATKAKKAPKSPAKARAVKPKAAKPKTSKPKAAKPKKTAAKKK</sequence>
<name>H14_RAT</name>
<protein>
    <recommendedName>
        <fullName>Histone H1.4</fullName>
    </recommendedName>
    <alternativeName>
        <fullName>H1d</fullName>
    </alternativeName>
</protein>
<evidence type="ECO:0000250" key="1"/>
<evidence type="ECO:0000250" key="2">
    <source>
        <dbReference type="UniProtKB" id="P10412"/>
    </source>
</evidence>
<evidence type="ECO:0000250" key="3">
    <source>
        <dbReference type="UniProtKB" id="P43274"/>
    </source>
</evidence>
<evidence type="ECO:0000250" key="4">
    <source>
        <dbReference type="UniProtKB" id="P43275"/>
    </source>
</evidence>
<evidence type="ECO:0000250" key="5">
    <source>
        <dbReference type="UniProtKB" id="P43277"/>
    </source>
</evidence>
<evidence type="ECO:0000255" key="6">
    <source>
        <dbReference type="PROSITE-ProRule" id="PRU00837"/>
    </source>
</evidence>
<evidence type="ECO:0000256" key="7">
    <source>
        <dbReference type="SAM" id="MobiDB-lite"/>
    </source>
</evidence>
<evidence type="ECO:0000269" key="8">
    <source ref="3"/>
</evidence>
<evidence type="ECO:0000305" key="9"/>
<evidence type="ECO:0000312" key="10">
    <source>
        <dbReference type="RGD" id="2776"/>
    </source>
</evidence>
<evidence type="ECO:0007744" key="11">
    <source>
    </source>
</evidence>
<feature type="initiator methionine" description="Removed" evidence="8">
    <location>
        <position position="1"/>
    </location>
</feature>
<feature type="chain" id="PRO_0000195924" description="Histone H1.4">
    <location>
        <begin position="2"/>
        <end position="219"/>
    </location>
</feature>
<feature type="domain" description="H15" evidence="6">
    <location>
        <begin position="36"/>
        <end position="109"/>
    </location>
</feature>
<feature type="region of interest" description="Disordered" evidence="7">
    <location>
        <begin position="1"/>
        <end position="41"/>
    </location>
</feature>
<feature type="region of interest" description="Disordered" evidence="7">
    <location>
        <begin position="92"/>
        <end position="219"/>
    </location>
</feature>
<feature type="compositionally biased region" description="Low complexity" evidence="7">
    <location>
        <begin position="1"/>
        <end position="15"/>
    </location>
</feature>
<feature type="compositionally biased region" description="Basic residues" evidence="7">
    <location>
        <begin position="20"/>
        <end position="35"/>
    </location>
</feature>
<feature type="compositionally biased region" description="Basic residues" evidence="7">
    <location>
        <begin position="119"/>
        <end position="140"/>
    </location>
</feature>
<feature type="compositionally biased region" description="Basic residues" evidence="7">
    <location>
        <begin position="149"/>
        <end position="160"/>
    </location>
</feature>
<feature type="compositionally biased region" description="Basic residues" evidence="7">
    <location>
        <begin position="168"/>
        <end position="185"/>
    </location>
</feature>
<feature type="compositionally biased region" description="Basic residues" evidence="7">
    <location>
        <begin position="192"/>
        <end position="219"/>
    </location>
</feature>
<feature type="modified residue" description="N-acetylserine" evidence="8">
    <location>
        <position position="2"/>
    </location>
</feature>
<feature type="modified residue" description="Phosphoserine" evidence="11">
    <location>
        <position position="2"/>
    </location>
</feature>
<feature type="modified residue" description="N6-acetyllysine" evidence="3">
    <location>
        <position position="17"/>
    </location>
</feature>
<feature type="modified residue" description="Phosphothreonine" evidence="11">
    <location>
        <position position="18"/>
    </location>
</feature>
<feature type="modified residue" description="N6-acetyllysine; alternate" evidence="2">
    <location>
        <position position="26"/>
    </location>
</feature>
<feature type="modified residue" description="N6-methyllysine; alternate" evidence="2">
    <location>
        <position position="26"/>
    </location>
</feature>
<feature type="modified residue" description="N6-(beta-hydroxybutyryl)lysine; alternate" evidence="5">
    <location>
        <position position="34"/>
    </location>
</feature>
<feature type="modified residue" description="N6-succinyllysine; alternate" evidence="3">
    <location>
        <position position="34"/>
    </location>
</feature>
<feature type="modified residue" description="Phosphoserine" evidence="3">
    <location>
        <position position="36"/>
    </location>
</feature>
<feature type="modified residue" description="N6-(beta-hydroxybutyryl)lysine" evidence="5">
    <location>
        <position position="52"/>
    </location>
</feature>
<feature type="modified residue" description="Citrulline" evidence="3">
    <location>
        <position position="54"/>
    </location>
</feature>
<feature type="modified residue" description="N6-(beta-hydroxybutyryl)lysine" evidence="5">
    <location>
        <position position="64"/>
    </location>
</feature>
<feature type="modified residue" description="N6-(beta-hydroxybutyryl)lysine" evidence="5">
    <location>
        <position position="85"/>
    </location>
</feature>
<feature type="modified residue" description="N6-(beta-hydroxybutyryl)lysine" evidence="5">
    <location>
        <position position="90"/>
    </location>
</feature>
<feature type="modified residue" description="N6-(beta-hydroxybutyryl)lysine" evidence="5">
    <location>
        <position position="106"/>
    </location>
</feature>
<feature type="modified residue" description="Phosphothreonine" evidence="2">
    <location>
        <position position="146"/>
    </location>
</feature>
<feature type="modified residue" description="ADP-ribosylserine" evidence="2">
    <location>
        <position position="150"/>
    </location>
</feature>
<feature type="modified residue" description="Phosphoserine" evidence="2">
    <location>
        <position position="187"/>
    </location>
</feature>
<feature type="sequence conflict" description="In Ref. 2; AAA41327." evidence="9" ref="2">
    <location>
        <begin position="163"/>
        <end position="164"/>
    </location>
</feature>
<organism>
    <name type="scientific">Rattus norvegicus</name>
    <name type="common">Rat</name>
    <dbReference type="NCBI Taxonomy" id="10116"/>
    <lineage>
        <taxon>Eukaryota</taxon>
        <taxon>Metazoa</taxon>
        <taxon>Chordata</taxon>
        <taxon>Craniata</taxon>
        <taxon>Vertebrata</taxon>
        <taxon>Euteleostomi</taxon>
        <taxon>Mammalia</taxon>
        <taxon>Eutheria</taxon>
        <taxon>Euarchontoglires</taxon>
        <taxon>Glires</taxon>
        <taxon>Rodentia</taxon>
        <taxon>Myomorpha</taxon>
        <taxon>Muroidea</taxon>
        <taxon>Muridae</taxon>
        <taxon>Murinae</taxon>
        <taxon>Rattus</taxon>
    </lineage>
</organism>
<dbReference type="EMBL" id="X67320">
    <property type="protein sequence ID" value="CAA47734.1"/>
    <property type="molecule type" value="Genomic_DNA"/>
</dbReference>
<dbReference type="EMBL" id="M31229">
    <property type="protein sequence ID" value="AAA41327.1"/>
    <property type="molecule type" value="Genomic_DNA"/>
</dbReference>
<dbReference type="PIR" id="JH0159">
    <property type="entry name" value="JH0159"/>
</dbReference>
<dbReference type="RefSeq" id="NP_579819.1">
    <property type="nucleotide sequence ID" value="NM_133285.1"/>
</dbReference>
<dbReference type="SMR" id="P15865"/>
<dbReference type="BioGRID" id="251423">
    <property type="interactions" value="5"/>
</dbReference>
<dbReference type="FunCoup" id="P15865">
    <property type="interactions" value="437"/>
</dbReference>
<dbReference type="IntAct" id="P15865">
    <property type="interactions" value="3"/>
</dbReference>
<dbReference type="STRING" id="10116.ENSRNOP00000066786"/>
<dbReference type="iPTMnet" id="P15865"/>
<dbReference type="PhosphoSitePlus" id="P15865"/>
<dbReference type="PaxDb" id="10116-ENSRNOP00000066786"/>
<dbReference type="Ensembl" id="ENSRNOT00000072564.2">
    <property type="protein sequence ID" value="ENSRNOP00000066786.1"/>
    <property type="gene ID" value="ENSRNOG00000047459.2"/>
</dbReference>
<dbReference type="GeneID" id="201097"/>
<dbReference type="KEGG" id="rno:201097"/>
<dbReference type="AGR" id="RGD:2776"/>
<dbReference type="CTD" id="50709"/>
<dbReference type="RGD" id="2776">
    <property type="gene designation" value="H1f4"/>
</dbReference>
<dbReference type="eggNOG" id="KOG4012">
    <property type="taxonomic scope" value="Eukaryota"/>
</dbReference>
<dbReference type="GeneTree" id="ENSGT00940000155501"/>
<dbReference type="HOGENOM" id="CLU_052897_7_0_1"/>
<dbReference type="InParanoid" id="P15865"/>
<dbReference type="OMA" id="MISECIA"/>
<dbReference type="OrthoDB" id="9634976at2759"/>
<dbReference type="Reactome" id="R-RNO-140342">
    <property type="pathway name" value="Apoptosis induced DNA fragmentation"/>
</dbReference>
<dbReference type="PRO" id="PR:P15865"/>
<dbReference type="Proteomes" id="UP000002494">
    <property type="component" value="Chromosome 17"/>
</dbReference>
<dbReference type="Bgee" id="ENSRNOG00000047459">
    <property type="expression patterns" value="Expressed in spleen and 16 other cell types or tissues"/>
</dbReference>
<dbReference type="GO" id="GO:0000785">
    <property type="term" value="C:chromatin"/>
    <property type="evidence" value="ECO:0000304"/>
    <property type="project" value="RGD"/>
</dbReference>
<dbReference type="GO" id="GO:0000791">
    <property type="term" value="C:euchromatin"/>
    <property type="evidence" value="ECO:0000318"/>
    <property type="project" value="GO_Central"/>
</dbReference>
<dbReference type="GO" id="GO:0000792">
    <property type="term" value="C:heterochromatin"/>
    <property type="evidence" value="ECO:0000266"/>
    <property type="project" value="RGD"/>
</dbReference>
<dbReference type="GO" id="GO:0000786">
    <property type="term" value="C:nucleosome"/>
    <property type="evidence" value="ECO:0000314"/>
    <property type="project" value="CAFA"/>
</dbReference>
<dbReference type="GO" id="GO:0005634">
    <property type="term" value="C:nucleus"/>
    <property type="evidence" value="ECO:0000266"/>
    <property type="project" value="RGD"/>
</dbReference>
<dbReference type="GO" id="GO:0043531">
    <property type="term" value="F:ADP binding"/>
    <property type="evidence" value="ECO:0000314"/>
    <property type="project" value="CAFA"/>
</dbReference>
<dbReference type="GO" id="GO:0016208">
    <property type="term" value="F:AMP binding"/>
    <property type="evidence" value="ECO:0000314"/>
    <property type="project" value="CAFA"/>
</dbReference>
<dbReference type="GO" id="GO:0005524">
    <property type="term" value="F:ATP binding"/>
    <property type="evidence" value="ECO:0000314"/>
    <property type="project" value="CAFA"/>
</dbReference>
<dbReference type="GO" id="GO:0005509">
    <property type="term" value="F:calcium ion binding"/>
    <property type="evidence" value="ECO:0000314"/>
    <property type="project" value="CAFA"/>
</dbReference>
<dbReference type="GO" id="GO:0031490">
    <property type="term" value="F:chromatin DNA binding"/>
    <property type="evidence" value="ECO:0000266"/>
    <property type="project" value="RGD"/>
</dbReference>
<dbReference type="GO" id="GO:0032564">
    <property type="term" value="F:dATP binding"/>
    <property type="evidence" value="ECO:0000314"/>
    <property type="project" value="CAFA"/>
</dbReference>
<dbReference type="GO" id="GO:0003677">
    <property type="term" value="F:DNA binding"/>
    <property type="evidence" value="ECO:0000269"/>
    <property type="project" value="DisProt"/>
</dbReference>
<dbReference type="GO" id="GO:0003690">
    <property type="term" value="F:double-stranded DNA binding"/>
    <property type="evidence" value="ECO:0000314"/>
    <property type="project" value="CAFA"/>
</dbReference>
<dbReference type="GO" id="GO:0005525">
    <property type="term" value="F:GTP binding"/>
    <property type="evidence" value="ECO:0000314"/>
    <property type="project" value="CAFA"/>
</dbReference>
<dbReference type="GO" id="GO:0042826">
    <property type="term" value="F:histone deacetylase binding"/>
    <property type="evidence" value="ECO:0000266"/>
    <property type="project" value="RGD"/>
</dbReference>
<dbReference type="GO" id="GO:0031492">
    <property type="term" value="F:nucleosomal DNA binding"/>
    <property type="evidence" value="ECO:0000318"/>
    <property type="project" value="GO_Central"/>
</dbReference>
<dbReference type="GO" id="GO:0000166">
    <property type="term" value="F:nucleotide binding"/>
    <property type="evidence" value="ECO:0000314"/>
    <property type="project" value="CAFA"/>
</dbReference>
<dbReference type="GO" id="GO:0030527">
    <property type="term" value="F:structural constituent of chromatin"/>
    <property type="evidence" value="ECO:0000266"/>
    <property type="project" value="RGD"/>
</dbReference>
<dbReference type="GO" id="GO:0006325">
    <property type="term" value="P:chromatin organization"/>
    <property type="evidence" value="ECO:0000266"/>
    <property type="project" value="RGD"/>
</dbReference>
<dbReference type="GO" id="GO:0030261">
    <property type="term" value="P:chromosome condensation"/>
    <property type="evidence" value="ECO:0000318"/>
    <property type="project" value="GO_Central"/>
</dbReference>
<dbReference type="GO" id="GO:0045910">
    <property type="term" value="P:negative regulation of DNA recombination"/>
    <property type="evidence" value="ECO:0000318"/>
    <property type="project" value="GO_Central"/>
</dbReference>
<dbReference type="GO" id="GO:0000122">
    <property type="term" value="P:negative regulation of transcription by RNA polymerase II"/>
    <property type="evidence" value="ECO:0000266"/>
    <property type="project" value="RGD"/>
</dbReference>
<dbReference type="GO" id="GO:0006334">
    <property type="term" value="P:nucleosome assembly"/>
    <property type="evidence" value="ECO:0007669"/>
    <property type="project" value="InterPro"/>
</dbReference>
<dbReference type="GO" id="GO:0006357">
    <property type="term" value="P:regulation of transcription by RNA polymerase II"/>
    <property type="evidence" value="ECO:0000266"/>
    <property type="project" value="RGD"/>
</dbReference>
<dbReference type="CDD" id="cd00073">
    <property type="entry name" value="H15"/>
    <property type="match status" value="1"/>
</dbReference>
<dbReference type="FunFam" id="1.10.10.10:FF:000075">
    <property type="entry name" value="Histone H1 like"/>
    <property type="match status" value="1"/>
</dbReference>
<dbReference type="Gene3D" id="1.10.10.10">
    <property type="entry name" value="Winged helix-like DNA-binding domain superfamily/Winged helix DNA-binding domain"/>
    <property type="match status" value="1"/>
</dbReference>
<dbReference type="InterPro" id="IPR005819">
    <property type="entry name" value="H1/H5"/>
</dbReference>
<dbReference type="InterPro" id="IPR005818">
    <property type="entry name" value="Histone_H1/H5_H15"/>
</dbReference>
<dbReference type="InterPro" id="IPR036388">
    <property type="entry name" value="WH-like_DNA-bd_sf"/>
</dbReference>
<dbReference type="InterPro" id="IPR036390">
    <property type="entry name" value="WH_DNA-bd_sf"/>
</dbReference>
<dbReference type="Pfam" id="PF00538">
    <property type="entry name" value="Linker_histone"/>
    <property type="match status" value="1"/>
</dbReference>
<dbReference type="PRINTS" id="PR00624">
    <property type="entry name" value="HISTONEH5"/>
</dbReference>
<dbReference type="SMART" id="SM00526">
    <property type="entry name" value="H15"/>
    <property type="match status" value="1"/>
</dbReference>
<dbReference type="SUPFAM" id="SSF46785">
    <property type="entry name" value="Winged helix' DNA-binding domain"/>
    <property type="match status" value="1"/>
</dbReference>
<dbReference type="PROSITE" id="PS51504">
    <property type="entry name" value="H15"/>
    <property type="match status" value="1"/>
</dbReference>
<proteinExistence type="evidence at protein level"/>
<comment type="function">
    <text evidence="1">Histone H1 protein binds to linker DNA between nucleosomes forming the macromolecular structure known as the chromatin fiber. Histones H1 are necessary for the condensation of nucleosome chains into higher-order structured fibers. Also acts as a regulator of individual gene transcription through chromatin remodeling, nucleosome spacing and DNA methylation (By similarity).</text>
</comment>
<comment type="subcellular location">
    <subcellularLocation>
        <location>Nucleus</location>
    </subcellularLocation>
    <subcellularLocation>
        <location>Chromosome</location>
    </subcellularLocation>
    <text evidence="1">Mainly localizes in euchromatin.</text>
</comment>
<comment type="domain">
    <text>The C-terminal domain is required for high-affinity binding to chromatin.</text>
</comment>
<comment type="PTM">
    <text evidence="4">H1 histones are progressively phosphorylated during the cell cycle, becoming maximally phosphorylated during late G2 phase and M phase, and being dephosphorylated sharply thereafter.</text>
</comment>
<comment type="PTM">
    <text evidence="2">Acetylated at Lys-26. Deacetylated at Lys-26 by SIRT1.</text>
</comment>
<comment type="PTM">
    <text evidence="3">Citrullination at Arg-54 (H1R54ci) by PADI4 takes place within the DNA-binding site of H1 and results in its displacement from chromatin and global chromatin decondensation, thereby promoting pluripotency and stem cell maintenance.</text>
</comment>
<comment type="PTM">
    <text evidence="2">ADP-ribosylated on Ser-150 in response to DNA damage.</text>
</comment>
<comment type="similarity">
    <text evidence="6">Belongs to the histone H1/H5 family.</text>
</comment>
<accession>P15865</accession>